<sequence>MLESKMKLVGKIREAHGLKGDLYVLVFSGEIAWAKRMKTFGLKAKDSDEIKTFTVERTKPFKKGLIVKAAEVADRTAAEGLEHMEFFIDDELMVSKPGETIFLSEIKNFKLKNPEQTVLGEIVGFSSNGVQDLLVVETTDGKTAEVPFVDAFIKKIDFKHQAVVMDLPEGLFDIENA</sequence>
<keyword id="KW-0143">Chaperone</keyword>
<keyword id="KW-0963">Cytoplasm</keyword>
<keyword id="KW-1185">Reference proteome</keyword>
<keyword id="KW-0690">Ribosome biogenesis</keyword>
<keyword id="KW-0698">rRNA processing</keyword>
<comment type="function">
    <text evidence="1">An accessory protein needed during the final step in the assembly of 30S ribosomal subunit, possibly for assembly of the head region. Essential for efficient processing of 16S rRNA. May be needed both before and after RbfA during the maturation of 16S rRNA. It has affinity for free ribosomal 30S subunits but not for 70S ribosomes.</text>
</comment>
<comment type="subunit">
    <text evidence="1">Binds ribosomal protein uS19.</text>
</comment>
<comment type="subcellular location">
    <subcellularLocation>
        <location evidence="1">Cytoplasm</location>
    </subcellularLocation>
</comment>
<comment type="domain">
    <text evidence="1">The PRC barrel domain binds ribosomal protein uS19.</text>
</comment>
<comment type="similarity">
    <text evidence="1">Belongs to the RimM family.</text>
</comment>
<name>RIMM_BDEBA</name>
<reference key="1">
    <citation type="journal article" date="2004" name="Science">
        <title>A predator unmasked: life cycle of Bdellovibrio bacteriovorus from a genomic perspective.</title>
        <authorList>
            <person name="Rendulic S."/>
            <person name="Jagtap P."/>
            <person name="Rosinus A."/>
            <person name="Eppinger M."/>
            <person name="Baar C."/>
            <person name="Lanz C."/>
            <person name="Keller H."/>
            <person name="Lambert C."/>
            <person name="Evans K.J."/>
            <person name="Goesmann A."/>
            <person name="Meyer F."/>
            <person name="Sockett R.E."/>
            <person name="Schuster S.C."/>
        </authorList>
    </citation>
    <scope>NUCLEOTIDE SEQUENCE [LARGE SCALE GENOMIC DNA]</scope>
    <source>
        <strain>ATCC 15356 / DSM 50701 / NCIMB 9529 / HD100</strain>
    </source>
</reference>
<evidence type="ECO:0000255" key="1">
    <source>
        <dbReference type="HAMAP-Rule" id="MF_00014"/>
    </source>
</evidence>
<proteinExistence type="inferred from homology"/>
<dbReference type="EMBL" id="BX842651">
    <property type="protein sequence ID" value="CAE79961.1"/>
    <property type="molecule type" value="Genomic_DNA"/>
</dbReference>
<dbReference type="SMR" id="Q6ML96"/>
<dbReference type="STRING" id="264462.Bd2120"/>
<dbReference type="KEGG" id="bba:Bd2120"/>
<dbReference type="eggNOG" id="COG0806">
    <property type="taxonomic scope" value="Bacteria"/>
</dbReference>
<dbReference type="HOGENOM" id="CLU_077636_0_0_7"/>
<dbReference type="Proteomes" id="UP000008080">
    <property type="component" value="Chromosome"/>
</dbReference>
<dbReference type="GO" id="GO:0005737">
    <property type="term" value="C:cytoplasm"/>
    <property type="evidence" value="ECO:0007669"/>
    <property type="project" value="UniProtKB-SubCell"/>
</dbReference>
<dbReference type="GO" id="GO:0005840">
    <property type="term" value="C:ribosome"/>
    <property type="evidence" value="ECO:0007669"/>
    <property type="project" value="InterPro"/>
</dbReference>
<dbReference type="GO" id="GO:0043022">
    <property type="term" value="F:ribosome binding"/>
    <property type="evidence" value="ECO:0007669"/>
    <property type="project" value="InterPro"/>
</dbReference>
<dbReference type="GO" id="GO:0042274">
    <property type="term" value="P:ribosomal small subunit biogenesis"/>
    <property type="evidence" value="ECO:0007669"/>
    <property type="project" value="UniProtKB-UniRule"/>
</dbReference>
<dbReference type="GO" id="GO:0006364">
    <property type="term" value="P:rRNA processing"/>
    <property type="evidence" value="ECO:0007669"/>
    <property type="project" value="UniProtKB-UniRule"/>
</dbReference>
<dbReference type="Gene3D" id="2.30.30.240">
    <property type="entry name" value="PRC-barrel domain"/>
    <property type="match status" value="1"/>
</dbReference>
<dbReference type="Gene3D" id="2.40.30.60">
    <property type="entry name" value="RimM"/>
    <property type="match status" value="1"/>
</dbReference>
<dbReference type="HAMAP" id="MF_00014">
    <property type="entry name" value="Ribosome_mat_RimM"/>
    <property type="match status" value="1"/>
</dbReference>
<dbReference type="InterPro" id="IPR011033">
    <property type="entry name" value="PRC_barrel-like_sf"/>
</dbReference>
<dbReference type="InterPro" id="IPR056792">
    <property type="entry name" value="PRC_RimM"/>
</dbReference>
<dbReference type="InterPro" id="IPR011961">
    <property type="entry name" value="RimM"/>
</dbReference>
<dbReference type="InterPro" id="IPR002676">
    <property type="entry name" value="RimM_N"/>
</dbReference>
<dbReference type="InterPro" id="IPR036976">
    <property type="entry name" value="RimM_N_sf"/>
</dbReference>
<dbReference type="InterPro" id="IPR009000">
    <property type="entry name" value="Transl_B-barrel_sf"/>
</dbReference>
<dbReference type="NCBIfam" id="TIGR02273">
    <property type="entry name" value="16S_RimM"/>
    <property type="match status" value="1"/>
</dbReference>
<dbReference type="PANTHER" id="PTHR33692">
    <property type="entry name" value="RIBOSOME MATURATION FACTOR RIMM"/>
    <property type="match status" value="1"/>
</dbReference>
<dbReference type="PANTHER" id="PTHR33692:SF1">
    <property type="entry name" value="RIBOSOME MATURATION FACTOR RIMM"/>
    <property type="match status" value="1"/>
</dbReference>
<dbReference type="Pfam" id="PF24986">
    <property type="entry name" value="PRC_RimM"/>
    <property type="match status" value="1"/>
</dbReference>
<dbReference type="Pfam" id="PF01782">
    <property type="entry name" value="RimM"/>
    <property type="match status" value="1"/>
</dbReference>
<dbReference type="SUPFAM" id="SSF50346">
    <property type="entry name" value="PRC-barrel domain"/>
    <property type="match status" value="1"/>
</dbReference>
<dbReference type="SUPFAM" id="SSF50447">
    <property type="entry name" value="Translation proteins"/>
    <property type="match status" value="1"/>
</dbReference>
<feature type="chain" id="PRO_0000163256" description="Ribosome maturation factor RimM">
    <location>
        <begin position="1"/>
        <end position="177"/>
    </location>
</feature>
<feature type="domain" description="PRC barrel" evidence="1">
    <location>
        <begin position="98"/>
        <end position="171"/>
    </location>
</feature>
<protein>
    <recommendedName>
        <fullName evidence="1">Ribosome maturation factor RimM</fullName>
    </recommendedName>
</protein>
<accession>Q6ML96</accession>
<gene>
    <name evidence="1" type="primary">rimM</name>
    <name type="ordered locus">Bd2120</name>
</gene>
<organism>
    <name type="scientific">Bdellovibrio bacteriovorus (strain ATCC 15356 / DSM 50701 / NCIMB 9529 / HD100)</name>
    <dbReference type="NCBI Taxonomy" id="264462"/>
    <lineage>
        <taxon>Bacteria</taxon>
        <taxon>Pseudomonadati</taxon>
        <taxon>Bdellovibrionota</taxon>
        <taxon>Bdellovibrionia</taxon>
        <taxon>Bdellovibrionales</taxon>
        <taxon>Pseudobdellovibrionaceae</taxon>
        <taxon>Bdellovibrio</taxon>
    </lineage>
</organism>